<protein>
    <recommendedName>
        <fullName>Protein Turandot X</fullName>
    </recommendedName>
</protein>
<accession>B3P309</accession>
<comment type="function">
    <text evidence="1">A humoral factor that may play a role in stress tolerance.</text>
</comment>
<comment type="subcellular location">
    <subcellularLocation>
        <location evidence="1">Secreted</location>
    </subcellularLocation>
</comment>
<comment type="similarity">
    <text evidence="2">Belongs to the Turandot family.</text>
</comment>
<organism>
    <name type="scientific">Drosophila erecta</name>
    <name type="common">Fruit fly</name>
    <dbReference type="NCBI Taxonomy" id="7220"/>
    <lineage>
        <taxon>Eukaryota</taxon>
        <taxon>Metazoa</taxon>
        <taxon>Ecdysozoa</taxon>
        <taxon>Arthropoda</taxon>
        <taxon>Hexapoda</taxon>
        <taxon>Insecta</taxon>
        <taxon>Pterygota</taxon>
        <taxon>Neoptera</taxon>
        <taxon>Endopterygota</taxon>
        <taxon>Diptera</taxon>
        <taxon>Brachycera</taxon>
        <taxon>Muscomorpha</taxon>
        <taxon>Ephydroidea</taxon>
        <taxon>Drosophilidae</taxon>
        <taxon>Drosophila</taxon>
        <taxon>Sophophora</taxon>
    </lineage>
</organism>
<dbReference type="EMBL" id="CH954181">
    <property type="protein sequence ID" value="EDV48323.1"/>
    <property type="molecule type" value="Genomic_DNA"/>
</dbReference>
<dbReference type="EnsemblMetazoa" id="FBtr0136558">
    <property type="protein sequence ID" value="FBpp0135050"/>
    <property type="gene ID" value="FBgn0108735"/>
</dbReference>
<dbReference type="EnsemblMetazoa" id="XM_001979329.3">
    <property type="protein sequence ID" value="XP_001979365.1"/>
    <property type="gene ID" value="LOC6553488"/>
</dbReference>
<dbReference type="GeneID" id="6553488"/>
<dbReference type="KEGG" id="der:6553488"/>
<dbReference type="HOGENOM" id="CLU_1817777_0_0_1"/>
<dbReference type="OMA" id="QFERFIH"/>
<dbReference type="OrthoDB" id="7850164at2759"/>
<dbReference type="PhylomeDB" id="B3P309"/>
<dbReference type="Proteomes" id="UP000008711">
    <property type="component" value="Unassembled WGS sequence"/>
</dbReference>
<dbReference type="GO" id="GO:0005615">
    <property type="term" value="C:extracellular space"/>
    <property type="evidence" value="ECO:0000250"/>
    <property type="project" value="UniProtKB"/>
</dbReference>
<dbReference type="GO" id="GO:0034605">
    <property type="term" value="P:cellular response to heat"/>
    <property type="evidence" value="ECO:0007669"/>
    <property type="project" value="EnsemblMetazoa"/>
</dbReference>
<dbReference type="GO" id="GO:0034599">
    <property type="term" value="P:cellular response to oxidative stress"/>
    <property type="evidence" value="ECO:0007669"/>
    <property type="project" value="EnsemblMetazoa"/>
</dbReference>
<dbReference type="GO" id="GO:0045087">
    <property type="term" value="P:innate immune response"/>
    <property type="evidence" value="ECO:0007669"/>
    <property type="project" value="UniProtKB-KW"/>
</dbReference>
<dbReference type="GO" id="GO:0009617">
    <property type="term" value="P:response to bacterium"/>
    <property type="evidence" value="ECO:0000250"/>
    <property type="project" value="UniProtKB"/>
</dbReference>
<dbReference type="GO" id="GO:0009408">
    <property type="term" value="P:response to heat"/>
    <property type="evidence" value="ECO:0000250"/>
    <property type="project" value="UniProtKB"/>
</dbReference>
<dbReference type="GO" id="GO:0006979">
    <property type="term" value="P:response to oxidative stress"/>
    <property type="evidence" value="ECO:0000250"/>
    <property type="project" value="UniProtKB"/>
</dbReference>
<dbReference type="InterPro" id="IPR010825">
    <property type="entry name" value="Turandot"/>
</dbReference>
<dbReference type="Pfam" id="PF07240">
    <property type="entry name" value="Turandot"/>
    <property type="match status" value="1"/>
</dbReference>
<name>TOTX_DROER</name>
<gene>
    <name evidence="1" type="primary">TotX</name>
    <name type="ORF">GG16504</name>
</gene>
<feature type="signal peptide" evidence="2">
    <location>
        <begin position="1"/>
        <end position="22"/>
    </location>
</feature>
<feature type="chain" id="PRO_0000354999" description="Protein Turandot X">
    <location>
        <begin position="23"/>
        <end position="152"/>
    </location>
</feature>
<proteinExistence type="inferred from homology"/>
<reference evidence="3" key="1">
    <citation type="journal article" date="2007" name="Nature">
        <title>Evolution of genes and genomes on the Drosophila phylogeny.</title>
        <authorList>
            <consortium name="Drosophila 12 genomes consortium"/>
        </authorList>
    </citation>
    <scope>NUCLEOTIDE SEQUENCE [LARGE SCALE GENOMIC DNA]</scope>
    <source>
        <strain evidence="3">Tucson 14021-0224.01</strain>
    </source>
</reference>
<keyword id="KW-0391">Immunity</keyword>
<keyword id="KW-0399">Innate immunity</keyword>
<keyword id="KW-0964">Secreted</keyword>
<keyword id="KW-0732">Signal</keyword>
<sequence>MGFYISSLLICVFLGIVRFASAGTYSSSYEAHRNYLLNIFHNPFVNDSIKERNIPELIAFYHRYPTEVPLSDEDRQQFERFIHDYREYRRVLIDGVPPQGGSFGNIFGHFLGRVGTRYILSLFNKQREEGLSNQATNSTIPPLRIQYLTKLS</sequence>
<evidence type="ECO:0000250" key="1">
    <source>
        <dbReference type="UniProtKB" id="Q8IN41"/>
    </source>
</evidence>
<evidence type="ECO:0000255" key="2"/>
<evidence type="ECO:0000312" key="3">
    <source>
        <dbReference type="EMBL" id="EDV48323.1"/>
    </source>
</evidence>